<accession>Q93ZY7</accession>
<accession>Q9LPW1</accession>
<keyword id="KW-0378">Hydrolase</keyword>
<keyword id="KW-0460">Magnesium</keyword>
<keyword id="KW-0464">Manganese</keyword>
<keyword id="KW-0479">Metal-binding</keyword>
<keyword id="KW-0496">Mitochondrion</keyword>
<keyword id="KW-1185">Reference proteome</keyword>
<keyword id="KW-0809">Transit peptide</keyword>
<feature type="transit peptide" description="Mitochondrion">
    <location>
        <begin position="1"/>
        <end status="unknown"/>
    </location>
</feature>
<feature type="chain" id="PRO_0000019955" description="Nudix hydrolase 12, mitochondrial">
    <location>
        <begin status="unknown"/>
        <end position="203"/>
    </location>
</feature>
<feature type="domain" description="Nudix hydrolase" evidence="2">
    <location>
        <begin position="18"/>
        <end position="166"/>
    </location>
</feature>
<feature type="short sequence motif" description="Nudix box">
    <location>
        <begin position="66"/>
        <end position="87"/>
    </location>
</feature>
<feature type="binding site" evidence="1">
    <location>
        <position position="81"/>
    </location>
    <ligand>
        <name>Mg(2+)</name>
        <dbReference type="ChEBI" id="CHEBI:18420"/>
    </ligand>
</feature>
<feature type="binding site" evidence="1">
    <location>
        <position position="85"/>
    </location>
    <ligand>
        <name>Mg(2+)</name>
        <dbReference type="ChEBI" id="CHEBI:18420"/>
    </ligand>
</feature>
<organism>
    <name type="scientific">Arabidopsis thaliana</name>
    <name type="common">Mouse-ear cress</name>
    <dbReference type="NCBI Taxonomy" id="3702"/>
    <lineage>
        <taxon>Eukaryota</taxon>
        <taxon>Viridiplantae</taxon>
        <taxon>Streptophyta</taxon>
        <taxon>Embryophyta</taxon>
        <taxon>Tracheophyta</taxon>
        <taxon>Spermatophyta</taxon>
        <taxon>Magnoliopsida</taxon>
        <taxon>eudicotyledons</taxon>
        <taxon>Gunneridae</taxon>
        <taxon>Pentapetalae</taxon>
        <taxon>rosids</taxon>
        <taxon>malvids</taxon>
        <taxon>Brassicales</taxon>
        <taxon>Brassicaceae</taxon>
        <taxon>Camelineae</taxon>
        <taxon>Arabidopsis</taxon>
    </lineage>
</organism>
<proteinExistence type="evidence at transcript level"/>
<dbReference type="EC" id="3.6.1.-"/>
<dbReference type="EMBL" id="AC012187">
    <property type="protein sequence ID" value="AAF78493.1"/>
    <property type="status" value="ALT_SEQ"/>
    <property type="molecule type" value="Genomic_DNA"/>
</dbReference>
<dbReference type="EMBL" id="CP002684">
    <property type="protein sequence ID" value="AEE28942.1"/>
    <property type="molecule type" value="Genomic_DNA"/>
</dbReference>
<dbReference type="EMBL" id="AY056178">
    <property type="protein sequence ID" value="AAL07027.1"/>
    <property type="molecule type" value="mRNA"/>
</dbReference>
<dbReference type="EMBL" id="AY091264">
    <property type="protein sequence ID" value="AAM14203.1"/>
    <property type="molecule type" value="mRNA"/>
</dbReference>
<dbReference type="PIR" id="E86262">
    <property type="entry name" value="E86262"/>
</dbReference>
<dbReference type="RefSeq" id="NP_563919.1">
    <property type="nucleotide sequence ID" value="NM_101159.2"/>
</dbReference>
<dbReference type="SMR" id="Q93ZY7"/>
<dbReference type="FunCoup" id="Q93ZY7">
    <property type="interactions" value="1566"/>
</dbReference>
<dbReference type="STRING" id="3702.Q93ZY7"/>
<dbReference type="PaxDb" id="3702-AT1G12880.1"/>
<dbReference type="ProteomicsDB" id="249431"/>
<dbReference type="EnsemblPlants" id="AT1G12880.1">
    <property type="protein sequence ID" value="AT1G12880.1"/>
    <property type="gene ID" value="AT1G12880"/>
</dbReference>
<dbReference type="GeneID" id="837845"/>
<dbReference type="Gramene" id="AT1G12880.1">
    <property type="protein sequence ID" value="AT1G12880.1"/>
    <property type="gene ID" value="AT1G12880"/>
</dbReference>
<dbReference type="KEGG" id="ath:AT1G12880"/>
<dbReference type="Araport" id="AT1G12880"/>
<dbReference type="TAIR" id="AT1G12880">
    <property type="gene designation" value="NUDT12"/>
</dbReference>
<dbReference type="eggNOG" id="KOG2839">
    <property type="taxonomic scope" value="Eukaryota"/>
</dbReference>
<dbReference type="HOGENOM" id="CLU_037162_5_2_1"/>
<dbReference type="InParanoid" id="Q93ZY7"/>
<dbReference type="OMA" id="WYCFVVN"/>
<dbReference type="OrthoDB" id="2011998at2759"/>
<dbReference type="PhylomeDB" id="Q93ZY7"/>
<dbReference type="BioCyc" id="ARA:AT1G12880-MONOMER"/>
<dbReference type="PRO" id="PR:Q93ZY7"/>
<dbReference type="Proteomes" id="UP000006548">
    <property type="component" value="Chromosome 1"/>
</dbReference>
<dbReference type="ExpressionAtlas" id="Q93ZY7">
    <property type="expression patterns" value="baseline and differential"/>
</dbReference>
<dbReference type="GO" id="GO:0005739">
    <property type="term" value="C:mitochondrion"/>
    <property type="evidence" value="ECO:0007669"/>
    <property type="project" value="UniProtKB-SubCell"/>
</dbReference>
<dbReference type="GO" id="GO:0046872">
    <property type="term" value="F:metal ion binding"/>
    <property type="evidence" value="ECO:0007669"/>
    <property type="project" value="UniProtKB-KW"/>
</dbReference>
<dbReference type="GO" id="GO:0016462">
    <property type="term" value="F:pyrophosphatase activity"/>
    <property type="evidence" value="ECO:0007669"/>
    <property type="project" value="InterPro"/>
</dbReference>
<dbReference type="CDD" id="cd04666">
    <property type="entry name" value="NUDIX_DIPP2_like_Nudt4"/>
    <property type="match status" value="1"/>
</dbReference>
<dbReference type="FunFam" id="3.90.79.10:FF:000030">
    <property type="entry name" value="Nudix hydrolase 13 mitochondrial"/>
    <property type="match status" value="1"/>
</dbReference>
<dbReference type="Gene3D" id="3.90.79.10">
    <property type="entry name" value="Nucleoside Triphosphate Pyrophosphohydrolase"/>
    <property type="match status" value="1"/>
</dbReference>
<dbReference type="InterPro" id="IPR047198">
    <property type="entry name" value="DDP-like_NUDIX"/>
</dbReference>
<dbReference type="InterPro" id="IPR015797">
    <property type="entry name" value="NUDIX_hydrolase-like_dom_sf"/>
</dbReference>
<dbReference type="InterPro" id="IPR020084">
    <property type="entry name" value="NUDIX_hydrolase_CS"/>
</dbReference>
<dbReference type="InterPro" id="IPR000086">
    <property type="entry name" value="NUDIX_hydrolase_dom"/>
</dbReference>
<dbReference type="PANTHER" id="PTHR12629">
    <property type="entry name" value="DIPHOSPHOINOSITOL POLYPHOSPHATE PHOSPHOHYDROLASE"/>
    <property type="match status" value="1"/>
</dbReference>
<dbReference type="PANTHER" id="PTHR12629:SF58">
    <property type="entry name" value="NUDIX HYDROLASE 12, MITOCHONDRIAL"/>
    <property type="match status" value="1"/>
</dbReference>
<dbReference type="Pfam" id="PF00293">
    <property type="entry name" value="NUDIX"/>
    <property type="match status" value="1"/>
</dbReference>
<dbReference type="SUPFAM" id="SSF55811">
    <property type="entry name" value="Nudix"/>
    <property type="match status" value="1"/>
</dbReference>
<dbReference type="PROSITE" id="PS51462">
    <property type="entry name" value="NUDIX"/>
    <property type="match status" value="1"/>
</dbReference>
<dbReference type="PROSITE" id="PS00893">
    <property type="entry name" value="NUDIX_BOX"/>
    <property type="match status" value="1"/>
</dbReference>
<gene>
    <name type="primary">NUDT12</name>
    <name type="synonym">NUDX12</name>
    <name type="ordered locus">At1g12880</name>
    <name type="ORF">F13K23.14</name>
</gene>
<protein>
    <recommendedName>
        <fullName>Nudix hydrolase 12, mitochondrial</fullName>
        <shortName>AtNUDT12</shortName>
        <ecNumber>3.6.1.-</ecNumber>
    </recommendedName>
</protein>
<sequence length="203" mass="23869">MSVLSSRTGRDRQRYDNNFRLVSGCIPYRLMKADETEEDSGVDFVNKLEVLMVSSPNRHDLVFPKGGWEDDETVLEAASREAIEEAGVKGILRELPLGVWEFRSKSSTVEDECLGGCKGYMFALKVTEELEDWPERKNRERRWLTVKEALELCRYEWMQRALEEFLRVMEDERRLRTEEETVHDSSKLEEESQIDPWYCFVVN</sequence>
<comment type="function">
    <text evidence="1">Probably mediates the hydrolysis of some nucleoside diphosphate derivatives.</text>
</comment>
<comment type="cofactor">
    <cofactor evidence="1">
        <name>Mg(2+)</name>
        <dbReference type="ChEBI" id="CHEBI:18420"/>
    </cofactor>
    <cofactor evidence="1">
        <name>Mn(2+)</name>
        <dbReference type="ChEBI" id="CHEBI:29035"/>
    </cofactor>
</comment>
<comment type="subcellular location">
    <subcellularLocation>
        <location evidence="4">Mitochondrion</location>
    </subcellularLocation>
</comment>
<comment type="tissue specificity">
    <text evidence="3">Expressed in roots, leaves, stems and inflorescences.</text>
</comment>
<comment type="similarity">
    <text evidence="4">Belongs to the Nudix hydrolase family.</text>
</comment>
<comment type="sequence caution" evidence="4">
    <conflict type="erroneous gene model prediction">
        <sequence resource="EMBL-CDS" id="AAF78493"/>
    </conflict>
</comment>
<evidence type="ECO:0000250" key="1"/>
<evidence type="ECO:0000255" key="2">
    <source>
        <dbReference type="PROSITE-ProRule" id="PRU00794"/>
    </source>
</evidence>
<evidence type="ECO:0000269" key="3">
    <source>
    </source>
</evidence>
<evidence type="ECO:0000305" key="4"/>
<name>NUD12_ARATH</name>
<reference key="1">
    <citation type="journal article" date="2000" name="Nature">
        <title>Sequence and analysis of chromosome 1 of the plant Arabidopsis thaliana.</title>
        <authorList>
            <person name="Theologis A."/>
            <person name="Ecker J.R."/>
            <person name="Palm C.J."/>
            <person name="Federspiel N.A."/>
            <person name="Kaul S."/>
            <person name="White O."/>
            <person name="Alonso J."/>
            <person name="Altafi H."/>
            <person name="Araujo R."/>
            <person name="Bowman C.L."/>
            <person name="Brooks S.Y."/>
            <person name="Buehler E."/>
            <person name="Chan A."/>
            <person name="Chao Q."/>
            <person name="Chen H."/>
            <person name="Cheuk R.F."/>
            <person name="Chin C.W."/>
            <person name="Chung M.K."/>
            <person name="Conn L."/>
            <person name="Conway A.B."/>
            <person name="Conway A.R."/>
            <person name="Creasy T.H."/>
            <person name="Dewar K."/>
            <person name="Dunn P."/>
            <person name="Etgu P."/>
            <person name="Feldblyum T.V."/>
            <person name="Feng J.-D."/>
            <person name="Fong B."/>
            <person name="Fujii C.Y."/>
            <person name="Gill J.E."/>
            <person name="Goldsmith A.D."/>
            <person name="Haas B."/>
            <person name="Hansen N.F."/>
            <person name="Hughes B."/>
            <person name="Huizar L."/>
            <person name="Hunter J.L."/>
            <person name="Jenkins J."/>
            <person name="Johnson-Hopson C."/>
            <person name="Khan S."/>
            <person name="Khaykin E."/>
            <person name="Kim C.J."/>
            <person name="Koo H.L."/>
            <person name="Kremenetskaia I."/>
            <person name="Kurtz D.B."/>
            <person name="Kwan A."/>
            <person name="Lam B."/>
            <person name="Langin-Hooper S."/>
            <person name="Lee A."/>
            <person name="Lee J.M."/>
            <person name="Lenz C.A."/>
            <person name="Li J.H."/>
            <person name="Li Y.-P."/>
            <person name="Lin X."/>
            <person name="Liu S.X."/>
            <person name="Liu Z.A."/>
            <person name="Luros J.S."/>
            <person name="Maiti R."/>
            <person name="Marziali A."/>
            <person name="Militscher J."/>
            <person name="Miranda M."/>
            <person name="Nguyen M."/>
            <person name="Nierman W.C."/>
            <person name="Osborne B.I."/>
            <person name="Pai G."/>
            <person name="Peterson J."/>
            <person name="Pham P.K."/>
            <person name="Rizzo M."/>
            <person name="Rooney T."/>
            <person name="Rowley D."/>
            <person name="Sakano H."/>
            <person name="Salzberg S.L."/>
            <person name="Schwartz J.R."/>
            <person name="Shinn P."/>
            <person name="Southwick A.M."/>
            <person name="Sun H."/>
            <person name="Tallon L.J."/>
            <person name="Tambunga G."/>
            <person name="Toriumi M.J."/>
            <person name="Town C.D."/>
            <person name="Utterback T."/>
            <person name="Van Aken S."/>
            <person name="Vaysberg M."/>
            <person name="Vysotskaia V.S."/>
            <person name="Walker M."/>
            <person name="Wu D."/>
            <person name="Yu G."/>
            <person name="Fraser C.M."/>
            <person name="Venter J.C."/>
            <person name="Davis R.W."/>
        </authorList>
    </citation>
    <scope>NUCLEOTIDE SEQUENCE [LARGE SCALE GENOMIC DNA]</scope>
    <source>
        <strain>cv. Columbia</strain>
    </source>
</reference>
<reference key="2">
    <citation type="journal article" date="2017" name="Plant J.">
        <title>Araport11: a complete reannotation of the Arabidopsis thaliana reference genome.</title>
        <authorList>
            <person name="Cheng C.Y."/>
            <person name="Krishnakumar V."/>
            <person name="Chan A.P."/>
            <person name="Thibaud-Nissen F."/>
            <person name="Schobel S."/>
            <person name="Town C.D."/>
        </authorList>
    </citation>
    <scope>GENOME REANNOTATION</scope>
    <source>
        <strain>cv. Columbia</strain>
    </source>
</reference>
<reference key="3">
    <citation type="journal article" date="2003" name="Science">
        <title>Empirical analysis of transcriptional activity in the Arabidopsis genome.</title>
        <authorList>
            <person name="Yamada K."/>
            <person name="Lim J."/>
            <person name="Dale J.M."/>
            <person name="Chen H."/>
            <person name="Shinn P."/>
            <person name="Palm C.J."/>
            <person name="Southwick A.M."/>
            <person name="Wu H.C."/>
            <person name="Kim C.J."/>
            <person name="Nguyen M."/>
            <person name="Pham P.K."/>
            <person name="Cheuk R.F."/>
            <person name="Karlin-Newmann G."/>
            <person name="Liu S.X."/>
            <person name="Lam B."/>
            <person name="Sakano H."/>
            <person name="Wu T."/>
            <person name="Yu G."/>
            <person name="Miranda M."/>
            <person name="Quach H.L."/>
            <person name="Tripp M."/>
            <person name="Chang C.H."/>
            <person name="Lee J.M."/>
            <person name="Toriumi M.J."/>
            <person name="Chan M.M."/>
            <person name="Tang C.C."/>
            <person name="Onodera C.S."/>
            <person name="Deng J.M."/>
            <person name="Akiyama K."/>
            <person name="Ansari Y."/>
            <person name="Arakawa T."/>
            <person name="Banh J."/>
            <person name="Banno F."/>
            <person name="Bowser L."/>
            <person name="Brooks S.Y."/>
            <person name="Carninci P."/>
            <person name="Chao Q."/>
            <person name="Choy N."/>
            <person name="Enju A."/>
            <person name="Goldsmith A.D."/>
            <person name="Gurjal M."/>
            <person name="Hansen N.F."/>
            <person name="Hayashizaki Y."/>
            <person name="Johnson-Hopson C."/>
            <person name="Hsuan V.W."/>
            <person name="Iida K."/>
            <person name="Karnes M."/>
            <person name="Khan S."/>
            <person name="Koesema E."/>
            <person name="Ishida J."/>
            <person name="Jiang P.X."/>
            <person name="Jones T."/>
            <person name="Kawai J."/>
            <person name="Kamiya A."/>
            <person name="Meyers C."/>
            <person name="Nakajima M."/>
            <person name="Narusaka M."/>
            <person name="Seki M."/>
            <person name="Sakurai T."/>
            <person name="Satou M."/>
            <person name="Tamse R."/>
            <person name="Vaysberg M."/>
            <person name="Wallender E.K."/>
            <person name="Wong C."/>
            <person name="Yamamura Y."/>
            <person name="Yuan S."/>
            <person name="Shinozaki K."/>
            <person name="Davis R.W."/>
            <person name="Theologis A."/>
            <person name="Ecker J.R."/>
        </authorList>
    </citation>
    <scope>NUCLEOTIDE SEQUENCE [LARGE SCALE MRNA]</scope>
    <source>
        <strain>cv. Columbia</strain>
    </source>
</reference>
<reference key="4">
    <citation type="journal article" date="2005" name="J. Biol. Chem.">
        <title>Comprehensive analysis of cytosolic nudix hydrolases in Arabidopsis thaliana.</title>
        <authorList>
            <person name="Ogawa T."/>
            <person name="Ueda Y."/>
            <person name="Yoshimura K."/>
            <person name="Shigeoka S."/>
        </authorList>
    </citation>
    <scope>NOMENCLATURE</scope>
</reference>
<reference key="5">
    <citation type="journal article" date="2008" name="Plant Physiol.">
        <title>Molecular characterization of organelle-type Nudix hydrolases in Arabidopsis.</title>
        <authorList>
            <person name="Ogawa T."/>
            <person name="Yoshimura K."/>
            <person name="Miyake H."/>
            <person name="Ishikawa K."/>
            <person name="Ito D."/>
            <person name="Tanabe N."/>
            <person name="Shigeoka S."/>
        </authorList>
    </citation>
    <scope>TISSUE SPECIFICITY</scope>
</reference>